<name>RECB_MYCTO</name>
<evidence type="ECO:0000250" key="1">
    <source>
        <dbReference type="UniProtKB" id="A0QS29"/>
    </source>
</evidence>
<evidence type="ECO:0000255" key="2">
    <source>
        <dbReference type="HAMAP-Rule" id="MF_01485"/>
    </source>
</evidence>
<comment type="function">
    <text evidence="1">A helicase/nuclease that prepares dsDNA breaks (DSB) for recombinational DNA repair. Binds to DSBs and unwinds DNA via a highly rapid and processive ATP-dependent bidirectional helicase activity. In the holoenzyme this subunit contributes ATPase, 3'-5' helicase, exonuclease activity and loads RecA onto ssDNA. Unlike the case in E.coli, suppresses RecA-dependent homologous recombination, is instead required for single-strand annealing pathway repair of DSB.</text>
</comment>
<comment type="catalytic activity">
    <reaction evidence="2">
        <text>Exonucleolytic cleavage (in the presence of ATP) in either 5'- to 3'- or 3'- to 5'-direction to yield 5'-phosphooligonucleotides.</text>
        <dbReference type="EC" id="3.1.11.5"/>
    </reaction>
</comment>
<comment type="catalytic activity">
    <reaction evidence="2">
        <text>Couples ATP hydrolysis with the unwinding of duplex DNA by translocating in the 3'-5' direction.</text>
        <dbReference type="EC" id="5.6.2.4"/>
    </reaction>
</comment>
<comment type="catalytic activity">
    <reaction evidence="2">
        <text>ATP + H2O = ADP + phosphate + H(+)</text>
        <dbReference type="Rhea" id="RHEA:13065"/>
        <dbReference type="ChEBI" id="CHEBI:15377"/>
        <dbReference type="ChEBI" id="CHEBI:15378"/>
        <dbReference type="ChEBI" id="CHEBI:30616"/>
        <dbReference type="ChEBI" id="CHEBI:43474"/>
        <dbReference type="ChEBI" id="CHEBI:456216"/>
        <dbReference type="EC" id="5.6.2.4"/>
    </reaction>
</comment>
<comment type="cofactor">
    <cofactor evidence="2">
        <name>Mg(2+)</name>
        <dbReference type="ChEBI" id="CHEBI:18420"/>
    </cofactor>
    <text evidence="2">Binds 1 Mg(2+) ion per subunit.</text>
</comment>
<comment type="subunit">
    <text evidence="2">Heterotrimer of RecB, RecC and RecD. All subunits contribute to DNA-binding. Interacts with RecA.</text>
</comment>
<comment type="domain">
    <text evidence="2">The N-terminal DNA-binding domain is a ssDNA-dependent ATPase and has ATP-dependent 3'-5' helicase function. This domain interacts with RecC.</text>
</comment>
<comment type="domain">
    <text evidence="2">The C-terminal domain has nuclease activity and interacts with RecD. It interacts with RecA, facilitating its loading onto ssDNA.</text>
</comment>
<comment type="miscellaneous">
    <text evidence="2">In the RecBCD complex, RecB has a slow 3'-5' helicase, an exonuclease activity and loads RecA onto ssDNA, RecD has a fast 5'-3' helicase activity, while RecC stimulates the ATPase and processivity of the RecB helicase and contributes to recognition of the Chi site.</text>
</comment>
<comment type="similarity">
    <text evidence="2">Belongs to the helicase family. UvrD subfamily.</text>
</comment>
<accession>P9WMQ2</accession>
<accession>L0T4F0</accession>
<accession>P96920</accession>
<protein>
    <recommendedName>
        <fullName evidence="2">RecBCD enzyme subunit RecB</fullName>
        <ecNumber evidence="2">3.1.11.5</ecNumber>
        <ecNumber evidence="2">5.6.2.4</ecNumber>
    </recommendedName>
    <alternativeName>
        <fullName evidence="2">DNA 3'-5' helicase subunit RecB</fullName>
    </alternativeName>
    <alternativeName>
        <fullName evidence="2">Exonuclease V subunit RecB</fullName>
        <shortName evidence="2">ExoV subunit RecB</shortName>
    </alternativeName>
    <alternativeName>
        <fullName evidence="2">Helicase/nuclease RecBCD subunit RecB</fullName>
    </alternativeName>
</protein>
<gene>
    <name evidence="2" type="primary">recB</name>
    <name type="ordered locus">MT0658</name>
</gene>
<keyword id="KW-0067">ATP-binding</keyword>
<keyword id="KW-0227">DNA damage</keyword>
<keyword id="KW-0234">DNA repair</keyword>
<keyword id="KW-0238">DNA-binding</keyword>
<keyword id="KW-0269">Exonuclease</keyword>
<keyword id="KW-0347">Helicase</keyword>
<keyword id="KW-0378">Hydrolase</keyword>
<keyword id="KW-0413">Isomerase</keyword>
<keyword id="KW-0460">Magnesium</keyword>
<keyword id="KW-0479">Metal-binding</keyword>
<keyword id="KW-0540">Nuclease</keyword>
<keyword id="KW-0547">Nucleotide-binding</keyword>
<keyword id="KW-1185">Reference proteome</keyword>
<proteinExistence type="inferred from homology"/>
<sequence length="1094" mass="118722">MDRFELLGPLPREGTTTVLEASAGTGKTFALAGLVTRYLAETAATLDEMLLITFNRAASRELRERVRGQIVEAVGALQGDAPPSGELVEHLLRGSDAERAQKRSRLRDALANFDAATIATTHEFCGSVLKSLGVAGDNAADVELKESLTDLVTEIVDDRYLANFGRQETDPELTYAEALALALAVVDDPCAQLRPPDPEPGSKAAVRLRFAAEVLEELERRKGRLRAQGFNDLLIRLATALEAADSPARDRMRERWRIVLVDEFQDTDPMQWRVLERAFSRHSALILIGDPKQAIYGFRGGDIHTYLKAAGTADARYTLGVNWRSDRALVESLQTVLRDATLGHADIVVRGTDAHHAGHRLASAPRPAPFRLRVVKRHTLGYDGTAHVPIEALRRHIPDDLAADVAALLASGATFAGRPVVAADIAVIVEHHKDARACRNALAEAGIPAIYTGDTDVFASQAAKDWLCLLEAFDAPQRSGLVRAAACTMFFGETAESLAAEGDALTDRVAGTLREWADHARHRGVAAVFQAAQLAGMGRRVLSQRGGERDLTDLAHIAQLLHEAAHRERLGLPGLRDWLRRQAKAGAGPPEHNRRLDSDAAAVQIMTVFVAKGLQFPIVYLPFAFNRNVRSDDILLYHDDGTRCLYIGGKDGGAQRRTVEGLNRVEAAHDNLRLTYVALTRAQSQVVAWWAPTFDEVNGGLSRLLRGRRPGQSQVPDRCTPRVTDEQAWAVFAQWEAAGGPSVEESVIGARSSLEKPVPVPGFEVRHFHRRIDTTWRRTSYSDLVRGSEAVTVTSEPAAGGRADEVEIAVVAAPGSGADLTSPLAALPSGASFGSLVHAVLETADPAAPDLAAELEAQVRRHAPWWTVDVDHAQLAPELARALLPMHDTPLGPAAAALTLRQIGVRDRLRELDFEMPLAGGDLRGRSPDVSLADVGELLASHLPGDDPLSPYADRLGSAGLGDQPLRGYLAGSIDVVLRLPGQRYLVVDYKTNHLGDTAADYGFERLTEAMLHSDYPLQALLYVVVLHRFLRWRQRDYAPARHLGGVLYLFVRGMCGAATPVTAGHPAGVFTWNPPTALVVALSDLLDRGRLQS</sequence>
<feature type="chain" id="PRO_0000427264" description="RecBCD enzyme subunit RecB">
    <location>
        <begin position="1"/>
        <end position="1094"/>
    </location>
</feature>
<feature type="domain" description="UvrD-like helicase ATP-binding" evidence="2">
    <location>
        <begin position="1"/>
        <end position="326"/>
    </location>
</feature>
<feature type="domain" description="UvrD-like helicase C-terminal" evidence="2">
    <location>
        <begin position="357"/>
        <end position="613"/>
    </location>
</feature>
<feature type="region of interest" description="DNA-binding and helicase activity, interacts with RecC" evidence="2">
    <location>
        <begin position="1"/>
        <end position="713"/>
    </location>
</feature>
<feature type="region of interest" description="Nuclease activity, interacts with RecD and RecA" evidence="2">
    <location>
        <begin position="775"/>
        <end position="1094"/>
    </location>
</feature>
<feature type="active site" description="For nuclease activity" evidence="2">
    <location>
        <position position="989"/>
    </location>
</feature>
<feature type="binding site" evidence="2">
    <location>
        <begin position="21"/>
        <end position="28"/>
    </location>
    <ligand>
        <name>ATP</name>
        <dbReference type="ChEBI" id="CHEBI:30616"/>
    </ligand>
</feature>
<feature type="binding site" evidence="2">
    <location>
        <position position="838"/>
    </location>
    <ligand>
        <name>Mg(2+)</name>
        <dbReference type="ChEBI" id="CHEBI:18420"/>
    </ligand>
</feature>
<feature type="binding site" evidence="2">
    <location>
        <position position="975"/>
    </location>
    <ligand>
        <name>Mg(2+)</name>
        <dbReference type="ChEBI" id="CHEBI:18420"/>
    </ligand>
</feature>
<feature type="binding site" evidence="2">
    <location>
        <position position="989"/>
    </location>
    <ligand>
        <name>Mg(2+)</name>
        <dbReference type="ChEBI" id="CHEBI:18420"/>
    </ligand>
</feature>
<dbReference type="EC" id="3.1.11.5" evidence="2"/>
<dbReference type="EC" id="5.6.2.4" evidence="2"/>
<dbReference type="EMBL" id="AE000516">
    <property type="protein sequence ID" value="AAK44882.1"/>
    <property type="molecule type" value="Genomic_DNA"/>
</dbReference>
<dbReference type="PIR" id="C70612">
    <property type="entry name" value="C70612"/>
</dbReference>
<dbReference type="RefSeq" id="WP_003905355.1">
    <property type="nucleotide sequence ID" value="NZ_KK341227.1"/>
</dbReference>
<dbReference type="SMR" id="P9WMQ2"/>
<dbReference type="KEGG" id="mtc:MT0658"/>
<dbReference type="PATRIC" id="fig|83331.31.peg.698"/>
<dbReference type="HOGENOM" id="CLU_001114_6_1_11"/>
<dbReference type="Proteomes" id="UP000001020">
    <property type="component" value="Chromosome"/>
</dbReference>
<dbReference type="GO" id="GO:0005829">
    <property type="term" value="C:cytosol"/>
    <property type="evidence" value="ECO:0007669"/>
    <property type="project" value="TreeGrafter"/>
</dbReference>
<dbReference type="GO" id="GO:0009338">
    <property type="term" value="C:exodeoxyribonuclease V complex"/>
    <property type="evidence" value="ECO:0007669"/>
    <property type="project" value="TreeGrafter"/>
</dbReference>
<dbReference type="GO" id="GO:0043138">
    <property type="term" value="F:3'-5' DNA helicase activity"/>
    <property type="evidence" value="ECO:0007669"/>
    <property type="project" value="UniProtKB-UniRule"/>
</dbReference>
<dbReference type="GO" id="GO:0005524">
    <property type="term" value="F:ATP binding"/>
    <property type="evidence" value="ECO:0007669"/>
    <property type="project" value="UniProtKB-UniRule"/>
</dbReference>
<dbReference type="GO" id="GO:0016887">
    <property type="term" value="F:ATP hydrolysis activity"/>
    <property type="evidence" value="ECO:0007669"/>
    <property type="project" value="RHEA"/>
</dbReference>
<dbReference type="GO" id="GO:0003677">
    <property type="term" value="F:DNA binding"/>
    <property type="evidence" value="ECO:0007669"/>
    <property type="project" value="UniProtKB-UniRule"/>
</dbReference>
<dbReference type="GO" id="GO:0008854">
    <property type="term" value="F:exodeoxyribonuclease V activity"/>
    <property type="evidence" value="ECO:0007669"/>
    <property type="project" value="UniProtKB-EC"/>
</dbReference>
<dbReference type="GO" id="GO:0000287">
    <property type="term" value="F:magnesium ion binding"/>
    <property type="evidence" value="ECO:0007669"/>
    <property type="project" value="UniProtKB-UniRule"/>
</dbReference>
<dbReference type="GO" id="GO:0000724">
    <property type="term" value="P:double-strand break repair via homologous recombination"/>
    <property type="evidence" value="ECO:0007669"/>
    <property type="project" value="UniProtKB-UniRule"/>
</dbReference>
<dbReference type="CDD" id="cd22352">
    <property type="entry name" value="RecB_C-like"/>
    <property type="match status" value="1"/>
</dbReference>
<dbReference type="Gene3D" id="3.90.320.10">
    <property type="match status" value="1"/>
</dbReference>
<dbReference type="Gene3D" id="3.40.50.300">
    <property type="entry name" value="P-loop containing nucleotide triphosphate hydrolases"/>
    <property type="match status" value="2"/>
</dbReference>
<dbReference type="Gene3D" id="1.10.486.10">
    <property type="entry name" value="PCRA, domain 4"/>
    <property type="match status" value="1"/>
</dbReference>
<dbReference type="HAMAP" id="MF_01485">
    <property type="entry name" value="RecB"/>
    <property type="match status" value="1"/>
</dbReference>
<dbReference type="InterPro" id="IPR014017">
    <property type="entry name" value="DNA_helicase_UvrD-like_C"/>
</dbReference>
<dbReference type="InterPro" id="IPR000212">
    <property type="entry name" value="DNA_helicase_UvrD/REP"/>
</dbReference>
<dbReference type="InterPro" id="IPR027417">
    <property type="entry name" value="P-loop_NTPase"/>
</dbReference>
<dbReference type="InterPro" id="IPR011604">
    <property type="entry name" value="PDDEXK-like_dom_sf"/>
</dbReference>
<dbReference type="InterPro" id="IPR038726">
    <property type="entry name" value="PDDEXK_AddAB-type"/>
</dbReference>
<dbReference type="InterPro" id="IPR004586">
    <property type="entry name" value="RecB"/>
</dbReference>
<dbReference type="InterPro" id="IPR011335">
    <property type="entry name" value="Restrct_endonuc-II-like"/>
</dbReference>
<dbReference type="InterPro" id="IPR014016">
    <property type="entry name" value="UvrD-like_ATP-bd"/>
</dbReference>
<dbReference type="NCBIfam" id="TIGR00609">
    <property type="entry name" value="recB"/>
    <property type="match status" value="1"/>
</dbReference>
<dbReference type="PANTHER" id="PTHR11070:SF23">
    <property type="entry name" value="RECBCD ENZYME SUBUNIT RECB"/>
    <property type="match status" value="1"/>
</dbReference>
<dbReference type="PANTHER" id="PTHR11070">
    <property type="entry name" value="UVRD / RECB / PCRA DNA HELICASE FAMILY MEMBER"/>
    <property type="match status" value="1"/>
</dbReference>
<dbReference type="Pfam" id="PF12705">
    <property type="entry name" value="PDDEXK_1"/>
    <property type="match status" value="1"/>
</dbReference>
<dbReference type="Pfam" id="PF00580">
    <property type="entry name" value="UvrD-helicase"/>
    <property type="match status" value="1"/>
</dbReference>
<dbReference type="Pfam" id="PF13361">
    <property type="entry name" value="UvrD_C"/>
    <property type="match status" value="1"/>
</dbReference>
<dbReference type="SUPFAM" id="SSF52540">
    <property type="entry name" value="P-loop containing nucleoside triphosphate hydrolases"/>
    <property type="match status" value="1"/>
</dbReference>
<dbReference type="SUPFAM" id="SSF52980">
    <property type="entry name" value="Restriction endonuclease-like"/>
    <property type="match status" value="1"/>
</dbReference>
<dbReference type="PROSITE" id="PS51198">
    <property type="entry name" value="UVRD_HELICASE_ATP_BIND"/>
    <property type="match status" value="1"/>
</dbReference>
<dbReference type="PROSITE" id="PS51217">
    <property type="entry name" value="UVRD_HELICASE_CTER"/>
    <property type="match status" value="1"/>
</dbReference>
<organism>
    <name type="scientific">Mycobacterium tuberculosis (strain CDC 1551 / Oshkosh)</name>
    <dbReference type="NCBI Taxonomy" id="83331"/>
    <lineage>
        <taxon>Bacteria</taxon>
        <taxon>Bacillati</taxon>
        <taxon>Actinomycetota</taxon>
        <taxon>Actinomycetes</taxon>
        <taxon>Mycobacteriales</taxon>
        <taxon>Mycobacteriaceae</taxon>
        <taxon>Mycobacterium</taxon>
        <taxon>Mycobacterium tuberculosis complex</taxon>
    </lineage>
</organism>
<reference key="1">
    <citation type="journal article" date="2002" name="J. Bacteriol.">
        <title>Whole-genome comparison of Mycobacterium tuberculosis clinical and laboratory strains.</title>
        <authorList>
            <person name="Fleischmann R.D."/>
            <person name="Alland D."/>
            <person name="Eisen J.A."/>
            <person name="Carpenter L."/>
            <person name="White O."/>
            <person name="Peterson J.D."/>
            <person name="DeBoy R.T."/>
            <person name="Dodson R.J."/>
            <person name="Gwinn M.L."/>
            <person name="Haft D.H."/>
            <person name="Hickey E.K."/>
            <person name="Kolonay J.F."/>
            <person name="Nelson W.C."/>
            <person name="Umayam L.A."/>
            <person name="Ermolaeva M.D."/>
            <person name="Salzberg S.L."/>
            <person name="Delcher A."/>
            <person name="Utterback T.R."/>
            <person name="Weidman J.F."/>
            <person name="Khouri H.M."/>
            <person name="Gill J."/>
            <person name="Mikula A."/>
            <person name="Bishai W."/>
            <person name="Jacobs W.R. Jr."/>
            <person name="Venter J.C."/>
            <person name="Fraser C.M."/>
        </authorList>
    </citation>
    <scope>NUCLEOTIDE SEQUENCE [LARGE SCALE GENOMIC DNA]</scope>
    <source>
        <strain>CDC 1551 / Oshkosh</strain>
    </source>
</reference>